<accession>Q8ZA88</accession>
<accession>Q0WA90</accession>
<proteinExistence type="inferred from homology"/>
<reference key="1">
    <citation type="journal article" date="2001" name="Nature">
        <title>Genome sequence of Yersinia pestis, the causative agent of plague.</title>
        <authorList>
            <person name="Parkhill J."/>
            <person name="Wren B.W."/>
            <person name="Thomson N.R."/>
            <person name="Titball R.W."/>
            <person name="Holden M.T.G."/>
            <person name="Prentice M.B."/>
            <person name="Sebaihia M."/>
            <person name="James K.D."/>
            <person name="Churcher C.M."/>
            <person name="Mungall K.L."/>
            <person name="Baker S."/>
            <person name="Basham D."/>
            <person name="Bentley S.D."/>
            <person name="Brooks K."/>
            <person name="Cerdeno-Tarraga A.-M."/>
            <person name="Chillingworth T."/>
            <person name="Cronin A."/>
            <person name="Davies R.M."/>
            <person name="Davis P."/>
            <person name="Dougan G."/>
            <person name="Feltwell T."/>
            <person name="Hamlin N."/>
            <person name="Holroyd S."/>
            <person name="Jagels K."/>
            <person name="Karlyshev A.V."/>
            <person name="Leather S."/>
            <person name="Moule S."/>
            <person name="Oyston P.C.F."/>
            <person name="Quail M.A."/>
            <person name="Rutherford K.M."/>
            <person name="Simmonds M."/>
            <person name="Skelton J."/>
            <person name="Stevens K."/>
            <person name="Whitehead S."/>
            <person name="Barrell B.G."/>
        </authorList>
    </citation>
    <scope>NUCLEOTIDE SEQUENCE [LARGE SCALE GENOMIC DNA]</scope>
    <source>
        <strain>CO-92 / Biovar Orientalis</strain>
    </source>
</reference>
<reference key="2">
    <citation type="journal article" date="2002" name="J. Bacteriol.">
        <title>Genome sequence of Yersinia pestis KIM.</title>
        <authorList>
            <person name="Deng W."/>
            <person name="Burland V."/>
            <person name="Plunkett G. III"/>
            <person name="Boutin A."/>
            <person name="Mayhew G.F."/>
            <person name="Liss P."/>
            <person name="Perna N.T."/>
            <person name="Rose D.J."/>
            <person name="Mau B."/>
            <person name="Zhou S."/>
            <person name="Schwartz D.C."/>
            <person name="Fetherston J.D."/>
            <person name="Lindler L.E."/>
            <person name="Brubaker R.R."/>
            <person name="Plano G.V."/>
            <person name="Straley S.C."/>
            <person name="McDonough K.A."/>
            <person name="Nilles M.L."/>
            <person name="Matson J.S."/>
            <person name="Blattner F.R."/>
            <person name="Perry R.D."/>
        </authorList>
    </citation>
    <scope>NUCLEOTIDE SEQUENCE [LARGE SCALE GENOMIC DNA]</scope>
    <source>
        <strain>KIM10+ / Biovar Mediaevalis</strain>
    </source>
</reference>
<reference key="3">
    <citation type="journal article" date="2004" name="DNA Res.">
        <title>Complete genome sequence of Yersinia pestis strain 91001, an isolate avirulent to humans.</title>
        <authorList>
            <person name="Song Y."/>
            <person name="Tong Z."/>
            <person name="Wang J."/>
            <person name="Wang L."/>
            <person name="Guo Z."/>
            <person name="Han Y."/>
            <person name="Zhang J."/>
            <person name="Pei D."/>
            <person name="Zhou D."/>
            <person name="Qin H."/>
            <person name="Pang X."/>
            <person name="Han Y."/>
            <person name="Zhai J."/>
            <person name="Li M."/>
            <person name="Cui B."/>
            <person name="Qi Z."/>
            <person name="Jin L."/>
            <person name="Dai R."/>
            <person name="Chen F."/>
            <person name="Li S."/>
            <person name="Ye C."/>
            <person name="Du Z."/>
            <person name="Lin W."/>
            <person name="Wang J."/>
            <person name="Yu J."/>
            <person name="Yang H."/>
            <person name="Wang J."/>
            <person name="Huang P."/>
            <person name="Yang R."/>
        </authorList>
    </citation>
    <scope>NUCLEOTIDE SEQUENCE [LARGE SCALE GENOMIC DNA]</scope>
    <source>
        <strain>91001 / Biovar Mediaevalis</strain>
    </source>
</reference>
<dbReference type="EC" id="4.3.2.1" evidence="1"/>
<dbReference type="EMBL" id="AL590842">
    <property type="protein sequence ID" value="CAL22508.1"/>
    <property type="molecule type" value="Genomic_DNA"/>
</dbReference>
<dbReference type="EMBL" id="AE009952">
    <property type="protein sequence ID" value="AAM83903.1"/>
    <property type="molecule type" value="Genomic_DNA"/>
</dbReference>
<dbReference type="EMBL" id="AE017042">
    <property type="protein sequence ID" value="AAS63295.1"/>
    <property type="molecule type" value="Genomic_DNA"/>
</dbReference>
<dbReference type="PIR" id="AI0477">
    <property type="entry name" value="AI0477"/>
</dbReference>
<dbReference type="RefSeq" id="WP_002209487.1">
    <property type="nucleotide sequence ID" value="NZ_WUCM01000072.1"/>
</dbReference>
<dbReference type="RefSeq" id="YP_002348798.1">
    <property type="nucleotide sequence ID" value="NC_003143.1"/>
</dbReference>
<dbReference type="SMR" id="Q8ZA88"/>
<dbReference type="IntAct" id="Q8ZA88">
    <property type="interactions" value="3"/>
</dbReference>
<dbReference type="STRING" id="214092.YPO3924"/>
<dbReference type="PaxDb" id="214092-YPO3924"/>
<dbReference type="DNASU" id="1145259"/>
<dbReference type="EnsemblBacteria" id="AAS63295">
    <property type="protein sequence ID" value="AAS63295"/>
    <property type="gene ID" value="YP_3125"/>
</dbReference>
<dbReference type="GeneID" id="57974777"/>
<dbReference type="KEGG" id="ype:YPO3924"/>
<dbReference type="KEGG" id="ypk:y0312"/>
<dbReference type="KEGG" id="ypm:YP_3125"/>
<dbReference type="PATRIC" id="fig|214092.21.peg.4453"/>
<dbReference type="eggNOG" id="COG0165">
    <property type="taxonomic scope" value="Bacteria"/>
</dbReference>
<dbReference type="HOGENOM" id="CLU_027272_2_3_6"/>
<dbReference type="OMA" id="DFAIEFC"/>
<dbReference type="OrthoDB" id="9769623at2"/>
<dbReference type="UniPathway" id="UPA00068">
    <property type="reaction ID" value="UER00114"/>
</dbReference>
<dbReference type="Proteomes" id="UP000000815">
    <property type="component" value="Chromosome"/>
</dbReference>
<dbReference type="Proteomes" id="UP000001019">
    <property type="component" value="Chromosome"/>
</dbReference>
<dbReference type="Proteomes" id="UP000002490">
    <property type="component" value="Chromosome"/>
</dbReference>
<dbReference type="GO" id="GO:0005829">
    <property type="term" value="C:cytosol"/>
    <property type="evidence" value="ECO:0000318"/>
    <property type="project" value="GO_Central"/>
</dbReference>
<dbReference type="GO" id="GO:0004056">
    <property type="term" value="F:argininosuccinate lyase activity"/>
    <property type="evidence" value="ECO:0000318"/>
    <property type="project" value="GO_Central"/>
</dbReference>
<dbReference type="GO" id="GO:0042450">
    <property type="term" value="P:arginine biosynthetic process via ornithine"/>
    <property type="evidence" value="ECO:0000318"/>
    <property type="project" value="GO_Central"/>
</dbReference>
<dbReference type="GO" id="GO:0006526">
    <property type="term" value="P:L-arginine biosynthetic process"/>
    <property type="evidence" value="ECO:0007669"/>
    <property type="project" value="UniProtKB-UniRule"/>
</dbReference>
<dbReference type="CDD" id="cd01359">
    <property type="entry name" value="Argininosuccinate_lyase"/>
    <property type="match status" value="1"/>
</dbReference>
<dbReference type="FunFam" id="1.10.275.10:FF:000004">
    <property type="entry name" value="Argininosuccinate lyase"/>
    <property type="match status" value="1"/>
</dbReference>
<dbReference type="FunFam" id="1.10.40.30:FF:000001">
    <property type="entry name" value="Argininosuccinate lyase"/>
    <property type="match status" value="1"/>
</dbReference>
<dbReference type="FunFam" id="1.20.200.10:FF:000006">
    <property type="entry name" value="Argininosuccinate lyase"/>
    <property type="match status" value="1"/>
</dbReference>
<dbReference type="Gene3D" id="1.10.40.30">
    <property type="entry name" value="Fumarase/aspartase (C-terminal domain)"/>
    <property type="match status" value="1"/>
</dbReference>
<dbReference type="Gene3D" id="1.20.200.10">
    <property type="entry name" value="Fumarase/aspartase (Central domain)"/>
    <property type="match status" value="1"/>
</dbReference>
<dbReference type="Gene3D" id="1.10.275.10">
    <property type="entry name" value="Fumarase/aspartase (N-terminal domain)"/>
    <property type="match status" value="1"/>
</dbReference>
<dbReference type="HAMAP" id="MF_00006">
    <property type="entry name" value="Arg_succ_lyase"/>
    <property type="match status" value="1"/>
</dbReference>
<dbReference type="InterPro" id="IPR029419">
    <property type="entry name" value="Arg_succ_lyase_C"/>
</dbReference>
<dbReference type="InterPro" id="IPR009049">
    <property type="entry name" value="Argininosuccinate_lyase"/>
</dbReference>
<dbReference type="InterPro" id="IPR024083">
    <property type="entry name" value="Fumarase/histidase_N"/>
</dbReference>
<dbReference type="InterPro" id="IPR020557">
    <property type="entry name" value="Fumarate_lyase_CS"/>
</dbReference>
<dbReference type="InterPro" id="IPR000362">
    <property type="entry name" value="Fumarate_lyase_fam"/>
</dbReference>
<dbReference type="InterPro" id="IPR022761">
    <property type="entry name" value="Fumarate_lyase_N"/>
</dbReference>
<dbReference type="InterPro" id="IPR008948">
    <property type="entry name" value="L-Aspartase-like"/>
</dbReference>
<dbReference type="NCBIfam" id="TIGR00838">
    <property type="entry name" value="argH"/>
    <property type="match status" value="1"/>
</dbReference>
<dbReference type="NCBIfam" id="NF008964">
    <property type="entry name" value="PRK12308.1"/>
    <property type="match status" value="1"/>
</dbReference>
<dbReference type="PANTHER" id="PTHR43814">
    <property type="entry name" value="ARGININOSUCCINATE LYASE"/>
    <property type="match status" value="1"/>
</dbReference>
<dbReference type="PANTHER" id="PTHR43814:SF1">
    <property type="entry name" value="ARGININOSUCCINATE LYASE"/>
    <property type="match status" value="1"/>
</dbReference>
<dbReference type="Pfam" id="PF14698">
    <property type="entry name" value="ASL_C2"/>
    <property type="match status" value="1"/>
</dbReference>
<dbReference type="Pfam" id="PF00206">
    <property type="entry name" value="Lyase_1"/>
    <property type="match status" value="1"/>
</dbReference>
<dbReference type="PRINTS" id="PR00145">
    <property type="entry name" value="ARGSUCLYASE"/>
</dbReference>
<dbReference type="PRINTS" id="PR00149">
    <property type="entry name" value="FUMRATELYASE"/>
</dbReference>
<dbReference type="SUPFAM" id="SSF48557">
    <property type="entry name" value="L-aspartase-like"/>
    <property type="match status" value="1"/>
</dbReference>
<dbReference type="PROSITE" id="PS00163">
    <property type="entry name" value="FUMARATE_LYASES"/>
    <property type="match status" value="1"/>
</dbReference>
<gene>
    <name evidence="1" type="primary">argH</name>
    <name type="ordered locus">YPO3924</name>
    <name type="ordered locus">y0312</name>
    <name type="ordered locus">YP_3125</name>
</gene>
<comment type="catalytic activity">
    <reaction evidence="1">
        <text>2-(N(omega)-L-arginino)succinate = fumarate + L-arginine</text>
        <dbReference type="Rhea" id="RHEA:24020"/>
        <dbReference type="ChEBI" id="CHEBI:29806"/>
        <dbReference type="ChEBI" id="CHEBI:32682"/>
        <dbReference type="ChEBI" id="CHEBI:57472"/>
        <dbReference type="EC" id="4.3.2.1"/>
    </reaction>
</comment>
<comment type="pathway">
    <text evidence="1">Amino-acid biosynthesis; L-arginine biosynthesis; L-arginine from L-ornithine and carbamoyl phosphate: step 3/3.</text>
</comment>
<comment type="subcellular location">
    <subcellularLocation>
        <location evidence="1">Cytoplasm</location>
    </subcellularLocation>
</comment>
<comment type="similarity">
    <text evidence="1">Belongs to the lyase 1 family. Argininosuccinate lyase subfamily.</text>
</comment>
<organism>
    <name type="scientific">Yersinia pestis</name>
    <dbReference type="NCBI Taxonomy" id="632"/>
    <lineage>
        <taxon>Bacteria</taxon>
        <taxon>Pseudomonadati</taxon>
        <taxon>Pseudomonadota</taxon>
        <taxon>Gammaproteobacteria</taxon>
        <taxon>Enterobacterales</taxon>
        <taxon>Yersiniaceae</taxon>
        <taxon>Yersinia</taxon>
    </lineage>
</organism>
<feature type="chain" id="PRO_0000137855" description="Argininosuccinate lyase">
    <location>
        <begin position="1"/>
        <end position="457"/>
    </location>
</feature>
<name>ARLY_YERPE</name>
<evidence type="ECO:0000255" key="1">
    <source>
        <dbReference type="HAMAP-Rule" id="MF_00006"/>
    </source>
</evidence>
<sequence>MALWGGRFSQAADQRFKQFNDSLRFDYRLAEQDIIGSVAWSKALVTVGVLNADEQQQLEQALSVLLEEVQANPHAILASDAEDIHSWVETKLIDKVGDLGKKLHTGRSRNDQVATDLKLWCKFQITELQTAVQQLQQALVMTAEANQDAVMPGYTHLQRAQPVTFAHWCLAYVEMLSRDESRLQDTLKRLDVSPLGCGALAGTAYAIDREQLAGWLGFASATRNSLDSVSDRDHVLELLSDASIGMVHLSRFAEDLIFFNSGEAAFVDLSDRVTSGSSLMPQKKNPDALELIRGKCGRVQGALTGMTMTLKGLPLAYNKDMQEDKEGLFDALDTWLDCLHMAALVLDGIQVKRPRCKEAAEQGYANATELADYLVAKGVPFREAHHIVGEAVVEAIRQGKALEALALSDLQQFSSVIGDDVYPILALQSCLDKRVAKGGVSPQQVASAIAEAKARLF</sequence>
<protein>
    <recommendedName>
        <fullName evidence="1">Argininosuccinate lyase</fullName>
        <shortName evidence="1">ASAL</shortName>
        <ecNumber evidence="1">4.3.2.1</ecNumber>
    </recommendedName>
    <alternativeName>
        <fullName evidence="1">Arginosuccinase</fullName>
    </alternativeName>
</protein>
<keyword id="KW-0028">Amino-acid biosynthesis</keyword>
<keyword id="KW-0055">Arginine biosynthesis</keyword>
<keyword id="KW-0963">Cytoplasm</keyword>
<keyword id="KW-0456">Lyase</keyword>
<keyword id="KW-1185">Reference proteome</keyword>